<reference key="1">
    <citation type="submission" date="2008-02" db="EMBL/GenBank/DDBJ databases">
        <title>Complete sequence of Yersinia pseudotuberculosis YPIII.</title>
        <authorList>
            <consortium name="US DOE Joint Genome Institute"/>
            <person name="Copeland A."/>
            <person name="Lucas S."/>
            <person name="Lapidus A."/>
            <person name="Glavina del Rio T."/>
            <person name="Dalin E."/>
            <person name="Tice H."/>
            <person name="Bruce D."/>
            <person name="Goodwin L."/>
            <person name="Pitluck S."/>
            <person name="Munk A.C."/>
            <person name="Brettin T."/>
            <person name="Detter J.C."/>
            <person name="Han C."/>
            <person name="Tapia R."/>
            <person name="Schmutz J."/>
            <person name="Larimer F."/>
            <person name="Land M."/>
            <person name="Hauser L."/>
            <person name="Challacombe J.F."/>
            <person name="Green L."/>
            <person name="Lindler L.E."/>
            <person name="Nikolich M.P."/>
            <person name="Richardson P."/>
        </authorList>
    </citation>
    <scope>NUCLEOTIDE SEQUENCE [LARGE SCALE GENOMIC DNA]</scope>
    <source>
        <strain>YPIII</strain>
    </source>
</reference>
<accession>B1JKK0</accession>
<comment type="function">
    <text evidence="1">Modulates the synthesis of GlmS, by affecting the processing and stability of the regulatory small RNA GlmZ. When glucosamine-6-phosphate (GlcN6P) concentrations are high in the cell, RapZ binds GlmZ and targets it to cleavage by RNase E. Consequently, GlmZ is inactivated and unable to activate GlmS synthesis. Under low GlcN6P concentrations, RapZ is sequestered and inactivated by an other regulatory small RNA, GlmY, preventing GlmZ degradation and leading to synthesis of GlmS.</text>
</comment>
<comment type="subunit">
    <text evidence="1">Homotrimer.</text>
</comment>
<comment type="similarity">
    <text evidence="1">Belongs to the RapZ-like family. RapZ subfamily.</text>
</comment>
<protein>
    <recommendedName>
        <fullName evidence="1">RNase adapter protein RapZ</fullName>
    </recommendedName>
</protein>
<evidence type="ECO:0000255" key="1">
    <source>
        <dbReference type="HAMAP-Rule" id="MF_00636"/>
    </source>
</evidence>
<dbReference type="EMBL" id="CP000950">
    <property type="protein sequence ID" value="ACA66805.1"/>
    <property type="molecule type" value="Genomic_DNA"/>
</dbReference>
<dbReference type="RefSeq" id="WP_002210113.1">
    <property type="nucleotide sequence ID" value="NZ_CP009792.1"/>
</dbReference>
<dbReference type="SMR" id="B1JKK0"/>
<dbReference type="GeneID" id="96663019"/>
<dbReference type="KEGG" id="ypy:YPK_0502"/>
<dbReference type="PATRIC" id="fig|502800.11.peg.1112"/>
<dbReference type="GO" id="GO:0005524">
    <property type="term" value="F:ATP binding"/>
    <property type="evidence" value="ECO:0007669"/>
    <property type="project" value="UniProtKB-UniRule"/>
</dbReference>
<dbReference type="GO" id="GO:0005525">
    <property type="term" value="F:GTP binding"/>
    <property type="evidence" value="ECO:0007669"/>
    <property type="project" value="UniProtKB-UniRule"/>
</dbReference>
<dbReference type="GO" id="GO:0003723">
    <property type="term" value="F:RNA binding"/>
    <property type="evidence" value="ECO:0007669"/>
    <property type="project" value="UniProtKB-KW"/>
</dbReference>
<dbReference type="HAMAP" id="MF_00636">
    <property type="entry name" value="RapZ_like"/>
    <property type="match status" value="1"/>
</dbReference>
<dbReference type="InterPro" id="IPR027417">
    <property type="entry name" value="P-loop_NTPase"/>
</dbReference>
<dbReference type="InterPro" id="IPR005337">
    <property type="entry name" value="RapZ-like"/>
</dbReference>
<dbReference type="InterPro" id="IPR053930">
    <property type="entry name" value="RapZ-like_N"/>
</dbReference>
<dbReference type="InterPro" id="IPR053931">
    <property type="entry name" value="RapZ_C"/>
</dbReference>
<dbReference type="NCBIfam" id="NF003828">
    <property type="entry name" value="PRK05416.1"/>
    <property type="match status" value="1"/>
</dbReference>
<dbReference type="PANTHER" id="PTHR30448">
    <property type="entry name" value="RNASE ADAPTER PROTEIN RAPZ"/>
    <property type="match status" value="1"/>
</dbReference>
<dbReference type="PANTHER" id="PTHR30448:SF0">
    <property type="entry name" value="RNASE ADAPTER PROTEIN RAPZ"/>
    <property type="match status" value="1"/>
</dbReference>
<dbReference type="Pfam" id="PF22740">
    <property type="entry name" value="PapZ_C"/>
    <property type="match status" value="1"/>
</dbReference>
<dbReference type="Pfam" id="PF03668">
    <property type="entry name" value="RapZ-like_N"/>
    <property type="match status" value="1"/>
</dbReference>
<dbReference type="PIRSF" id="PIRSF005052">
    <property type="entry name" value="P-loopkin"/>
    <property type="match status" value="1"/>
</dbReference>
<dbReference type="SUPFAM" id="SSF52540">
    <property type="entry name" value="P-loop containing nucleoside triphosphate hydrolases"/>
    <property type="match status" value="1"/>
</dbReference>
<sequence length="284" mass="32533">MVLMIVSGRSGSGKSVALRALEDMGFYCVDNLPVVLLPQLASTLADRNISAAVSIDVRNMPESPEVFEHAMTQLPDSFSPQLLFLDADRNTLIRRYSDTRRLHPLSAKNLSLESAIDEESDLLEPLRSRADLIIDTSEMSVHELAEMLRTRLLGKRERELTMVFESFGFKHGIPIDADYVFDVRFLPNPHWDPKLRPMTGLDKPVISFLDRHTEVHNFIYQTRSYLEQWLPMLETNNRSYLTVAIGCTGGKHRSVYVAEQLADYFRARGKNVQSRHRTLEKRKQ</sequence>
<keyword id="KW-0067">ATP-binding</keyword>
<keyword id="KW-0342">GTP-binding</keyword>
<keyword id="KW-0547">Nucleotide-binding</keyword>
<keyword id="KW-0694">RNA-binding</keyword>
<name>RAPZ_YERPY</name>
<proteinExistence type="inferred from homology"/>
<feature type="chain" id="PRO_1000130800" description="RNase adapter protein RapZ">
    <location>
        <begin position="1"/>
        <end position="284"/>
    </location>
</feature>
<feature type="region of interest" description="RNA-binding" evidence="1">
    <location>
        <begin position="266"/>
        <end position="284"/>
    </location>
</feature>
<feature type="binding site" evidence="1">
    <location>
        <begin position="8"/>
        <end position="15"/>
    </location>
    <ligand>
        <name>ATP</name>
        <dbReference type="ChEBI" id="CHEBI:30616"/>
    </ligand>
</feature>
<feature type="binding site" evidence="1">
    <location>
        <begin position="56"/>
        <end position="59"/>
    </location>
    <ligand>
        <name>GTP</name>
        <dbReference type="ChEBI" id="CHEBI:37565"/>
    </ligand>
</feature>
<organism>
    <name type="scientific">Yersinia pseudotuberculosis serotype O:3 (strain YPIII)</name>
    <dbReference type="NCBI Taxonomy" id="502800"/>
    <lineage>
        <taxon>Bacteria</taxon>
        <taxon>Pseudomonadati</taxon>
        <taxon>Pseudomonadota</taxon>
        <taxon>Gammaproteobacteria</taxon>
        <taxon>Enterobacterales</taxon>
        <taxon>Yersiniaceae</taxon>
        <taxon>Yersinia</taxon>
    </lineage>
</organism>
<gene>
    <name evidence="1" type="primary">rapZ</name>
    <name type="ordered locus">YPK_0502</name>
</gene>